<comment type="function">
    <text evidence="1">F(1)F(0) ATP synthase produces ATP from ADP in the presence of a proton or sodium gradient. F-type ATPases consist of two structural domains, F(1) containing the extramembraneous catalytic core and F(0) containing the membrane proton channel, linked together by a central stalk and a peripheral stalk. During catalysis, ATP synthesis in the catalytic domain of F(1) is coupled via a rotary mechanism of the central stalk subunits to proton translocation.</text>
</comment>
<comment type="function">
    <text evidence="1">Component of the F(0) channel, it forms part of the peripheral stalk, linking F(1) to F(0).</text>
</comment>
<comment type="subunit">
    <text evidence="1">F-type ATPases have 2 components, F(1) - the catalytic core - and F(0) - the membrane proton channel. F(1) has five subunits: alpha(3), beta(3), gamma(1), delta(1), epsilon(1). F(0) has three main subunits: a(1), b(2) and c(10-14). The alpha and beta chains form an alternating ring which encloses part of the gamma chain. F(1) is attached to F(0) by a central stalk formed by the gamma and epsilon chains, while a peripheral stalk is formed by the delta and b chains.</text>
</comment>
<comment type="subcellular location">
    <subcellularLocation>
        <location evidence="1">Cell inner membrane</location>
        <topology evidence="1">Single-pass membrane protein</topology>
    </subcellularLocation>
</comment>
<comment type="similarity">
    <text evidence="1">Belongs to the ATPase B chain family.</text>
</comment>
<proteinExistence type="inferred from homology"/>
<reference key="1">
    <citation type="journal article" date="2008" name="Science">
        <title>Genome of an endosymbiont coupling N2 fixation to cellulolysis within RT protist cells in termite gut.</title>
        <authorList>
            <person name="Hongoh Y."/>
            <person name="Sharma V.K."/>
            <person name="Prakash T."/>
            <person name="Noda S."/>
            <person name="Toh H."/>
            <person name="Taylor T.D."/>
            <person name="Kudo T."/>
            <person name="Sakaki Y."/>
            <person name="Toyoda A."/>
            <person name="Hattori M."/>
            <person name="Ohkuma M."/>
        </authorList>
    </citation>
    <scope>NUCLEOTIDE SEQUENCE [LARGE SCALE GENOMIC DNA]</scope>
</reference>
<evidence type="ECO:0000255" key="1">
    <source>
        <dbReference type="HAMAP-Rule" id="MF_01398"/>
    </source>
</evidence>
<feature type="chain" id="PRO_0000368319" description="ATP synthase subunit b">
    <location>
        <begin position="1"/>
        <end position="162"/>
    </location>
</feature>
<feature type="transmembrane region" description="Helical" evidence="1">
    <location>
        <begin position="6"/>
        <end position="26"/>
    </location>
</feature>
<sequence length="162" mass="18992">MSLLTPDIGLLFWMLLSFGIVFFVAAKYGFPVIVKMVDERNAFINKSLEEAKQANKRLRGIKEEEERLLKETYNKRIFIIKEANEMRIKIINDAKEKANFESNRLMKNAKENIQKEKELAMQDIRQQIAALSIDIAERVLRKSLDNKHEQLNLINELIKELN</sequence>
<name>ATPF_AZOPC</name>
<gene>
    <name evidence="1" type="primary">atpF</name>
    <name type="ordered locus">CFPG_367</name>
</gene>
<accession>B6YR08</accession>
<dbReference type="EMBL" id="AP010656">
    <property type="protein sequence ID" value="BAG83630.1"/>
    <property type="molecule type" value="Genomic_DNA"/>
</dbReference>
<dbReference type="RefSeq" id="WP_012573391.1">
    <property type="nucleotide sequence ID" value="NC_011565.1"/>
</dbReference>
<dbReference type="SMR" id="B6YR08"/>
<dbReference type="STRING" id="511995.CFPG_367"/>
<dbReference type="KEGG" id="aps:CFPG_367"/>
<dbReference type="eggNOG" id="COG0711">
    <property type="taxonomic scope" value="Bacteria"/>
</dbReference>
<dbReference type="HOGENOM" id="CLU_079215_4_1_10"/>
<dbReference type="OrthoDB" id="9795289at2"/>
<dbReference type="Proteomes" id="UP000000723">
    <property type="component" value="Chromosome"/>
</dbReference>
<dbReference type="GO" id="GO:0005886">
    <property type="term" value="C:plasma membrane"/>
    <property type="evidence" value="ECO:0007669"/>
    <property type="project" value="UniProtKB-SubCell"/>
</dbReference>
<dbReference type="GO" id="GO:0045259">
    <property type="term" value="C:proton-transporting ATP synthase complex"/>
    <property type="evidence" value="ECO:0007669"/>
    <property type="project" value="UniProtKB-KW"/>
</dbReference>
<dbReference type="GO" id="GO:0046933">
    <property type="term" value="F:proton-transporting ATP synthase activity, rotational mechanism"/>
    <property type="evidence" value="ECO:0007669"/>
    <property type="project" value="UniProtKB-UniRule"/>
</dbReference>
<dbReference type="GO" id="GO:0046961">
    <property type="term" value="F:proton-transporting ATPase activity, rotational mechanism"/>
    <property type="evidence" value="ECO:0007669"/>
    <property type="project" value="TreeGrafter"/>
</dbReference>
<dbReference type="CDD" id="cd06503">
    <property type="entry name" value="ATP-synt_Fo_b"/>
    <property type="match status" value="1"/>
</dbReference>
<dbReference type="Gene3D" id="1.20.5.620">
    <property type="entry name" value="F1F0 ATP synthase subunit B, membrane domain"/>
    <property type="match status" value="1"/>
</dbReference>
<dbReference type="HAMAP" id="MF_01398">
    <property type="entry name" value="ATP_synth_b_bprime"/>
    <property type="match status" value="1"/>
</dbReference>
<dbReference type="InterPro" id="IPR028987">
    <property type="entry name" value="ATP_synth_B-like_membr_sf"/>
</dbReference>
<dbReference type="InterPro" id="IPR002146">
    <property type="entry name" value="ATP_synth_b/b'su_bac/chlpt"/>
</dbReference>
<dbReference type="InterPro" id="IPR005864">
    <property type="entry name" value="ATP_synth_F0_bsu_bac"/>
</dbReference>
<dbReference type="InterPro" id="IPR050059">
    <property type="entry name" value="ATP_synthase_B_chain"/>
</dbReference>
<dbReference type="NCBIfam" id="TIGR01144">
    <property type="entry name" value="ATP_synt_b"/>
    <property type="match status" value="1"/>
</dbReference>
<dbReference type="PANTHER" id="PTHR33445:SF1">
    <property type="entry name" value="ATP SYNTHASE SUBUNIT B"/>
    <property type="match status" value="1"/>
</dbReference>
<dbReference type="PANTHER" id="PTHR33445">
    <property type="entry name" value="ATP SYNTHASE SUBUNIT B', CHLOROPLASTIC"/>
    <property type="match status" value="1"/>
</dbReference>
<dbReference type="Pfam" id="PF00430">
    <property type="entry name" value="ATP-synt_B"/>
    <property type="match status" value="1"/>
</dbReference>
<dbReference type="SUPFAM" id="SSF81573">
    <property type="entry name" value="F1F0 ATP synthase subunit B, membrane domain"/>
    <property type="match status" value="1"/>
</dbReference>
<protein>
    <recommendedName>
        <fullName evidence="1">ATP synthase subunit b</fullName>
    </recommendedName>
    <alternativeName>
        <fullName evidence="1">ATP synthase F(0) sector subunit b</fullName>
    </alternativeName>
    <alternativeName>
        <fullName evidence="1">ATPase subunit I</fullName>
    </alternativeName>
    <alternativeName>
        <fullName evidence="1">F-type ATPase subunit b</fullName>
        <shortName evidence="1">F-ATPase subunit b</shortName>
    </alternativeName>
</protein>
<organism>
    <name type="scientific">Azobacteroides pseudotrichonymphae genomovar. CFP2</name>
    <dbReference type="NCBI Taxonomy" id="511995"/>
    <lineage>
        <taxon>Bacteria</taxon>
        <taxon>Pseudomonadati</taxon>
        <taxon>Bacteroidota</taxon>
        <taxon>Bacteroidia</taxon>
        <taxon>Bacteroidales</taxon>
        <taxon>Candidatus Azobacteroides</taxon>
    </lineage>
</organism>
<keyword id="KW-0066">ATP synthesis</keyword>
<keyword id="KW-0997">Cell inner membrane</keyword>
<keyword id="KW-1003">Cell membrane</keyword>
<keyword id="KW-0138">CF(0)</keyword>
<keyword id="KW-0375">Hydrogen ion transport</keyword>
<keyword id="KW-0406">Ion transport</keyword>
<keyword id="KW-0472">Membrane</keyword>
<keyword id="KW-1185">Reference proteome</keyword>
<keyword id="KW-0812">Transmembrane</keyword>
<keyword id="KW-1133">Transmembrane helix</keyword>
<keyword id="KW-0813">Transport</keyword>